<dbReference type="EMBL" id="CP000462">
    <property type="protein sequence ID" value="ABK37719.1"/>
    <property type="molecule type" value="Genomic_DNA"/>
</dbReference>
<dbReference type="RefSeq" id="WP_011704882.1">
    <property type="nucleotide sequence ID" value="NC_008570.1"/>
</dbReference>
<dbReference type="RefSeq" id="YP_855487.1">
    <property type="nucleotide sequence ID" value="NC_008570.1"/>
</dbReference>
<dbReference type="SMR" id="A0KGU1"/>
<dbReference type="STRING" id="380703.AHA_0945"/>
<dbReference type="EnsemblBacteria" id="ABK37719">
    <property type="protein sequence ID" value="ABK37719"/>
    <property type="gene ID" value="AHA_0945"/>
</dbReference>
<dbReference type="GeneID" id="4486908"/>
<dbReference type="KEGG" id="aha:AHA_0945"/>
<dbReference type="PATRIC" id="fig|380703.7.peg.947"/>
<dbReference type="eggNOG" id="COG1452">
    <property type="taxonomic scope" value="Bacteria"/>
</dbReference>
<dbReference type="HOGENOM" id="CLU_009039_2_0_6"/>
<dbReference type="OrthoDB" id="9760225at2"/>
<dbReference type="Proteomes" id="UP000000756">
    <property type="component" value="Chromosome"/>
</dbReference>
<dbReference type="GO" id="GO:0009279">
    <property type="term" value="C:cell outer membrane"/>
    <property type="evidence" value="ECO:0007669"/>
    <property type="project" value="UniProtKB-SubCell"/>
</dbReference>
<dbReference type="GO" id="GO:1990351">
    <property type="term" value="C:transporter complex"/>
    <property type="evidence" value="ECO:0007669"/>
    <property type="project" value="TreeGrafter"/>
</dbReference>
<dbReference type="GO" id="GO:0043165">
    <property type="term" value="P:Gram-negative-bacterium-type cell outer membrane assembly"/>
    <property type="evidence" value="ECO:0007669"/>
    <property type="project" value="UniProtKB-UniRule"/>
</dbReference>
<dbReference type="GO" id="GO:0015920">
    <property type="term" value="P:lipopolysaccharide transport"/>
    <property type="evidence" value="ECO:0007669"/>
    <property type="project" value="InterPro"/>
</dbReference>
<dbReference type="Gene3D" id="2.60.450.10">
    <property type="entry name" value="Lipopolysaccharide (LPS) transport protein A like domain"/>
    <property type="match status" value="1"/>
</dbReference>
<dbReference type="HAMAP" id="MF_01411">
    <property type="entry name" value="LPS_assembly_LptD"/>
    <property type="match status" value="1"/>
</dbReference>
<dbReference type="InterPro" id="IPR020889">
    <property type="entry name" value="LipoPS_assembly_LptD"/>
</dbReference>
<dbReference type="InterPro" id="IPR050218">
    <property type="entry name" value="LptD"/>
</dbReference>
<dbReference type="InterPro" id="IPR007543">
    <property type="entry name" value="LptD_C"/>
</dbReference>
<dbReference type="InterPro" id="IPR005653">
    <property type="entry name" value="OstA-like_N"/>
</dbReference>
<dbReference type="PANTHER" id="PTHR30189">
    <property type="entry name" value="LPS-ASSEMBLY PROTEIN"/>
    <property type="match status" value="1"/>
</dbReference>
<dbReference type="PANTHER" id="PTHR30189:SF1">
    <property type="entry name" value="LPS-ASSEMBLY PROTEIN LPTD"/>
    <property type="match status" value="1"/>
</dbReference>
<dbReference type="Pfam" id="PF04453">
    <property type="entry name" value="LptD"/>
    <property type="match status" value="1"/>
</dbReference>
<dbReference type="Pfam" id="PF03968">
    <property type="entry name" value="LptD_N"/>
    <property type="match status" value="1"/>
</dbReference>
<reference key="1">
    <citation type="journal article" date="2006" name="J. Bacteriol.">
        <title>Genome sequence of Aeromonas hydrophila ATCC 7966T: jack of all trades.</title>
        <authorList>
            <person name="Seshadri R."/>
            <person name="Joseph S.W."/>
            <person name="Chopra A.K."/>
            <person name="Sha J."/>
            <person name="Shaw J."/>
            <person name="Graf J."/>
            <person name="Haft D.H."/>
            <person name="Wu M."/>
            <person name="Ren Q."/>
            <person name="Rosovitz M.J."/>
            <person name="Madupu R."/>
            <person name="Tallon L."/>
            <person name="Kim M."/>
            <person name="Jin S."/>
            <person name="Vuong H."/>
            <person name="Stine O.C."/>
            <person name="Ali A."/>
            <person name="Horneman A.J."/>
            <person name="Heidelberg J.F."/>
        </authorList>
    </citation>
    <scope>NUCLEOTIDE SEQUENCE [LARGE SCALE GENOMIC DNA]</scope>
    <source>
        <strain>ATCC 7966 / DSM 30187 / BCRC 13018 / CCUG 14551 / JCM 1027 / KCTC 2358 / NCIMB 9240 / NCTC 8049</strain>
    </source>
</reference>
<protein>
    <recommendedName>
        <fullName evidence="1">LPS-assembly protein LptD</fullName>
    </recommendedName>
</protein>
<comment type="function">
    <text evidence="1">Together with LptE, is involved in the assembly of lipopolysaccharide (LPS) at the surface of the outer membrane.</text>
</comment>
<comment type="subunit">
    <text evidence="1">Component of the lipopolysaccharide transport and assembly complex. Interacts with LptE and LptA.</text>
</comment>
<comment type="subcellular location">
    <subcellularLocation>
        <location evidence="1">Cell outer membrane</location>
    </subcellularLocation>
</comment>
<comment type="similarity">
    <text evidence="1">Belongs to the LptD family.</text>
</comment>
<name>LPTD_AERHH</name>
<keyword id="KW-0998">Cell outer membrane</keyword>
<keyword id="KW-0472">Membrane</keyword>
<keyword id="KW-1185">Reference proteome</keyword>
<keyword id="KW-0732">Signal</keyword>
<feature type="signal peptide" evidence="1">
    <location>
        <begin position="1"/>
        <end position="29"/>
    </location>
</feature>
<feature type="chain" id="PRO_0000281585" description="LPS-assembly protein LptD">
    <location>
        <begin position="30"/>
        <end position="810"/>
    </location>
</feature>
<accession>A0KGU1</accession>
<evidence type="ECO:0000255" key="1">
    <source>
        <dbReference type="HAMAP-Rule" id="MF_01411"/>
    </source>
</evidence>
<organism>
    <name type="scientific">Aeromonas hydrophila subsp. hydrophila (strain ATCC 7966 / DSM 30187 / BCRC 13018 / CCUG 14551 / JCM 1027 / KCTC 2358 / NCIMB 9240 / NCTC 8049)</name>
    <dbReference type="NCBI Taxonomy" id="380703"/>
    <lineage>
        <taxon>Bacteria</taxon>
        <taxon>Pseudomonadati</taxon>
        <taxon>Pseudomonadota</taxon>
        <taxon>Gammaproteobacteria</taxon>
        <taxon>Aeromonadales</taxon>
        <taxon>Aeromonadaceae</taxon>
        <taxon>Aeromonas</taxon>
    </lineage>
</organism>
<sequence length="810" mass="92094">MTKRTLGYSYPIALTISLVPALTPAIVQAAPLTPPPATGILDGLCYDYVPKIEKLAPGKDANAQPVEVDADRLEAKQGGTAVYQGDVKVRQGVRKFDSDYAELDQKSRDVIAIGNIYYNDGQITVTSDKTLKSNLDTKNSELEEGKYQVHGSPVRGSADRVTMTNNNQNITLEGAQYTTCPPGQEVWTLKAGSIDIDQTEVFGEAWNASLWLYDYPVFYFPYINFPIKDERKTGLLYPGYTQSSKNGMDITQPFYWNIAPNYDATITSRFMDRRGLMEQVQFRYMPDPAHVGSLYFENLANDKQYDETPSLNQAMSDGHRYLLNANHTSLFADNAMRVSLDYTKVRDRDYNYFNDFSPKVGTQVENQLQQSLMAGYFQPNWNINTEVRTYQILLASAQQPHELMPRIDHNYYQQGSWYDLAWNTEITKFGYNNAQAIAQNQGGAYTGTRVYTAPTLTMPLINEAGYYLDSQYKLMYTRYDQEVPDNMSQTFVSRFTPENGNGVTLDEGIITRTLPSFRLKGGMTFERNQNWFGGDANQTLEPEFQYLYVPYKNQDNIGVYDSTSMRQDYYSLFSDRRYAGLDRISDSNRVSIGLTSRVYDEAGDERIRLAVAQAFDFVAPRVKLYPSETLTTNTRSPLSFEGDAKINEQWFAHAGAQYDVDQSRLSSANSALEYRREKLISQLNHRFVRDANYDLENKGQVTDLNQIGLLLTTPLNDQWHLYGGYYQELNQSVKSDRKVGLKYDSCCWSINFNLEWVNTPDNVTMRPTSERSLGIQFEMKGLGSVGTGSKGTSLDTEALPYIRPFNLRDQ</sequence>
<proteinExistence type="inferred from homology"/>
<gene>
    <name evidence="1" type="primary">lptD</name>
    <name type="synonym">imp</name>
    <name type="synonym">ostA</name>
    <name type="ordered locus">AHA_0945</name>
</gene>